<gene>
    <name evidence="1" type="primary">erpA</name>
    <name type="ordered locus">PP_0433</name>
</gene>
<keyword id="KW-0408">Iron</keyword>
<keyword id="KW-0411">Iron-sulfur</keyword>
<keyword id="KW-0479">Metal-binding</keyword>
<keyword id="KW-1185">Reference proteome</keyword>
<feature type="chain" id="PRO_0000311528" description="Iron-sulfur cluster insertion protein ErpA">
    <location>
        <begin position="1"/>
        <end position="116"/>
    </location>
</feature>
<feature type="binding site" evidence="1">
    <location>
        <position position="44"/>
    </location>
    <ligand>
        <name>iron-sulfur cluster</name>
        <dbReference type="ChEBI" id="CHEBI:30408"/>
    </ligand>
</feature>
<feature type="binding site" evidence="1">
    <location>
        <position position="108"/>
    </location>
    <ligand>
        <name>iron-sulfur cluster</name>
        <dbReference type="ChEBI" id="CHEBI:30408"/>
    </ligand>
</feature>
<feature type="binding site" evidence="1">
    <location>
        <position position="110"/>
    </location>
    <ligand>
        <name>iron-sulfur cluster</name>
        <dbReference type="ChEBI" id="CHEBI:30408"/>
    </ligand>
</feature>
<reference key="1">
    <citation type="journal article" date="2002" name="Environ. Microbiol.">
        <title>Complete genome sequence and comparative analysis of the metabolically versatile Pseudomonas putida KT2440.</title>
        <authorList>
            <person name="Nelson K.E."/>
            <person name="Weinel C."/>
            <person name="Paulsen I.T."/>
            <person name="Dodson R.J."/>
            <person name="Hilbert H."/>
            <person name="Martins dos Santos V.A.P."/>
            <person name="Fouts D.E."/>
            <person name="Gill S.R."/>
            <person name="Pop M."/>
            <person name="Holmes M."/>
            <person name="Brinkac L.M."/>
            <person name="Beanan M.J."/>
            <person name="DeBoy R.T."/>
            <person name="Daugherty S.C."/>
            <person name="Kolonay J.F."/>
            <person name="Madupu R."/>
            <person name="Nelson W.C."/>
            <person name="White O."/>
            <person name="Peterson J.D."/>
            <person name="Khouri H.M."/>
            <person name="Hance I."/>
            <person name="Chris Lee P."/>
            <person name="Holtzapple E.K."/>
            <person name="Scanlan D."/>
            <person name="Tran K."/>
            <person name="Moazzez A."/>
            <person name="Utterback T.R."/>
            <person name="Rizzo M."/>
            <person name="Lee K."/>
            <person name="Kosack D."/>
            <person name="Moestl D."/>
            <person name="Wedler H."/>
            <person name="Lauber J."/>
            <person name="Stjepandic D."/>
            <person name="Hoheisel J."/>
            <person name="Straetz M."/>
            <person name="Heim S."/>
            <person name="Kiewitz C."/>
            <person name="Eisen J.A."/>
            <person name="Timmis K.N."/>
            <person name="Duesterhoeft A."/>
            <person name="Tuemmler B."/>
            <person name="Fraser C.M."/>
        </authorList>
    </citation>
    <scope>NUCLEOTIDE SEQUENCE [LARGE SCALE GENOMIC DNA]</scope>
    <source>
        <strain>ATCC 47054 / DSM 6125 / CFBP 8728 / NCIMB 11950 / KT2440</strain>
    </source>
</reference>
<proteinExistence type="inferred from homology"/>
<evidence type="ECO:0000255" key="1">
    <source>
        <dbReference type="HAMAP-Rule" id="MF_01380"/>
    </source>
</evidence>
<evidence type="ECO:0000305" key="2"/>
<protein>
    <recommendedName>
        <fullName evidence="1">Iron-sulfur cluster insertion protein ErpA</fullName>
    </recommendedName>
</protein>
<name>ERPA_PSEPK</name>
<comment type="function">
    <text evidence="1">Required for insertion of 4Fe-4S clusters for at least IspG.</text>
</comment>
<comment type="cofactor">
    <cofactor evidence="1">
        <name>iron-sulfur cluster</name>
        <dbReference type="ChEBI" id="CHEBI:30408"/>
    </cofactor>
    <text evidence="1">Binds 1 iron-sulfur cluster per subunit.</text>
</comment>
<comment type="subunit">
    <text evidence="1">Homodimer.</text>
</comment>
<comment type="similarity">
    <text evidence="1">Belongs to the HesB/IscA family.</text>
</comment>
<comment type="sequence caution" evidence="2">
    <conflict type="erroneous initiation">
        <sequence resource="EMBL-CDS" id="AAN66063"/>
    </conflict>
</comment>
<accession>Q88QQ5</accession>
<sequence length="116" mass="12517">MSVETFTPTGLEFTHGAAQKVKNLVNEEGNERLKLRVFVTGGGCSGFQYGFTFDEDVAEDDTIVEREGVSLVVDPMSFQYLAGAEVDYQEGLEGSRFVIKNPNAATTCGCGSSFSI</sequence>
<dbReference type="EMBL" id="AE015451">
    <property type="protein sequence ID" value="AAN66063.1"/>
    <property type="status" value="ALT_INIT"/>
    <property type="molecule type" value="Genomic_DNA"/>
</dbReference>
<dbReference type="RefSeq" id="NP_742599.1">
    <property type="nucleotide sequence ID" value="NC_002947.4"/>
</dbReference>
<dbReference type="RefSeq" id="WP_003255511.1">
    <property type="nucleotide sequence ID" value="NZ_CP169744.1"/>
</dbReference>
<dbReference type="SMR" id="Q88QQ5"/>
<dbReference type="STRING" id="160488.PP_0433"/>
<dbReference type="PaxDb" id="160488-PP_0433"/>
<dbReference type="GeneID" id="83677724"/>
<dbReference type="KEGG" id="ppu:PP_0433"/>
<dbReference type="PATRIC" id="fig|160488.4.peg.464"/>
<dbReference type="eggNOG" id="COG0316">
    <property type="taxonomic scope" value="Bacteria"/>
</dbReference>
<dbReference type="HOGENOM" id="CLU_069054_5_3_6"/>
<dbReference type="OrthoDB" id="9801228at2"/>
<dbReference type="Proteomes" id="UP000000556">
    <property type="component" value="Chromosome"/>
</dbReference>
<dbReference type="GO" id="GO:0005829">
    <property type="term" value="C:cytosol"/>
    <property type="evidence" value="ECO:0007669"/>
    <property type="project" value="TreeGrafter"/>
</dbReference>
<dbReference type="GO" id="GO:0051537">
    <property type="term" value="F:2 iron, 2 sulfur cluster binding"/>
    <property type="evidence" value="ECO:0007669"/>
    <property type="project" value="TreeGrafter"/>
</dbReference>
<dbReference type="GO" id="GO:0051539">
    <property type="term" value="F:4 iron, 4 sulfur cluster binding"/>
    <property type="evidence" value="ECO:0007669"/>
    <property type="project" value="TreeGrafter"/>
</dbReference>
<dbReference type="GO" id="GO:0005506">
    <property type="term" value="F:iron ion binding"/>
    <property type="evidence" value="ECO:0007669"/>
    <property type="project" value="UniProtKB-UniRule"/>
</dbReference>
<dbReference type="GO" id="GO:0016226">
    <property type="term" value="P:iron-sulfur cluster assembly"/>
    <property type="evidence" value="ECO:0007669"/>
    <property type="project" value="UniProtKB-UniRule"/>
</dbReference>
<dbReference type="FunFam" id="2.60.300.12:FF:000002">
    <property type="entry name" value="Iron-sulfur cluster insertion protein ErpA"/>
    <property type="match status" value="1"/>
</dbReference>
<dbReference type="Gene3D" id="2.60.300.12">
    <property type="entry name" value="HesB-like domain"/>
    <property type="match status" value="1"/>
</dbReference>
<dbReference type="HAMAP" id="MF_01380">
    <property type="entry name" value="Fe_S_insert_ErpA"/>
    <property type="match status" value="1"/>
</dbReference>
<dbReference type="InterPro" id="IPR000361">
    <property type="entry name" value="FeS_biogenesis"/>
</dbReference>
<dbReference type="InterPro" id="IPR016092">
    <property type="entry name" value="FeS_cluster_insertion"/>
</dbReference>
<dbReference type="InterPro" id="IPR017870">
    <property type="entry name" value="FeS_cluster_insertion_CS"/>
</dbReference>
<dbReference type="InterPro" id="IPR023063">
    <property type="entry name" value="FeS_cluster_insertion_RrpA"/>
</dbReference>
<dbReference type="InterPro" id="IPR035903">
    <property type="entry name" value="HesB-like_dom_sf"/>
</dbReference>
<dbReference type="NCBIfam" id="TIGR00049">
    <property type="entry name" value="iron-sulfur cluster assembly accessory protein"/>
    <property type="match status" value="1"/>
</dbReference>
<dbReference type="NCBIfam" id="NF010147">
    <property type="entry name" value="PRK13623.1"/>
    <property type="match status" value="1"/>
</dbReference>
<dbReference type="PANTHER" id="PTHR43011">
    <property type="entry name" value="IRON-SULFUR CLUSTER ASSEMBLY 2 HOMOLOG, MITOCHONDRIAL"/>
    <property type="match status" value="1"/>
</dbReference>
<dbReference type="PANTHER" id="PTHR43011:SF1">
    <property type="entry name" value="IRON-SULFUR CLUSTER ASSEMBLY 2 HOMOLOG, MITOCHONDRIAL"/>
    <property type="match status" value="1"/>
</dbReference>
<dbReference type="Pfam" id="PF01521">
    <property type="entry name" value="Fe-S_biosyn"/>
    <property type="match status" value="1"/>
</dbReference>
<dbReference type="SUPFAM" id="SSF89360">
    <property type="entry name" value="HesB-like domain"/>
    <property type="match status" value="1"/>
</dbReference>
<dbReference type="PROSITE" id="PS01152">
    <property type="entry name" value="HESB"/>
    <property type="match status" value="1"/>
</dbReference>
<organism>
    <name type="scientific">Pseudomonas putida (strain ATCC 47054 / DSM 6125 / CFBP 8728 / NCIMB 11950 / KT2440)</name>
    <dbReference type="NCBI Taxonomy" id="160488"/>
    <lineage>
        <taxon>Bacteria</taxon>
        <taxon>Pseudomonadati</taxon>
        <taxon>Pseudomonadota</taxon>
        <taxon>Gammaproteobacteria</taxon>
        <taxon>Pseudomonadales</taxon>
        <taxon>Pseudomonadaceae</taxon>
        <taxon>Pseudomonas</taxon>
    </lineage>
</organism>